<dbReference type="EMBL" id="AB022221">
    <property type="status" value="NOT_ANNOTATED_CDS"/>
    <property type="molecule type" value="Genomic_DNA"/>
</dbReference>
<dbReference type="EMBL" id="CP002688">
    <property type="protein sequence ID" value="AED95442.1"/>
    <property type="molecule type" value="Genomic_DNA"/>
</dbReference>
<dbReference type="RefSeq" id="NP_001032023.1">
    <property type="nucleotide sequence ID" value="NM_001036946.2"/>
</dbReference>
<dbReference type="PaxDb" id="3702-AT5G46877.1"/>
<dbReference type="EnsemblPlants" id="AT5G46877.1">
    <property type="protein sequence ID" value="AT5G46877.1"/>
    <property type="gene ID" value="AT5G46877"/>
</dbReference>
<dbReference type="GeneID" id="3771456"/>
<dbReference type="Gramene" id="AT5G46877.1">
    <property type="protein sequence ID" value="AT5G46877.1"/>
    <property type="gene ID" value="AT5G46877"/>
</dbReference>
<dbReference type="KEGG" id="ath:AT5G46877"/>
<dbReference type="Araport" id="AT5G46877"/>
<dbReference type="TAIR" id="AT5G46877"/>
<dbReference type="HOGENOM" id="CLU_162923_0_0_1"/>
<dbReference type="InParanoid" id="Q2V309"/>
<dbReference type="PhylomeDB" id="Q2V309"/>
<dbReference type="PRO" id="PR:Q2V309"/>
<dbReference type="Proteomes" id="UP000006548">
    <property type="component" value="Chromosome 5"/>
</dbReference>
<dbReference type="ExpressionAtlas" id="Q2V309">
    <property type="expression patterns" value="baseline and differential"/>
</dbReference>
<dbReference type="GO" id="GO:0005576">
    <property type="term" value="C:extracellular region"/>
    <property type="evidence" value="ECO:0007669"/>
    <property type="project" value="UniProtKB-SubCell"/>
</dbReference>
<dbReference type="GO" id="GO:0050832">
    <property type="term" value="P:defense response to fungus"/>
    <property type="evidence" value="ECO:0007669"/>
    <property type="project" value="UniProtKB-KW"/>
</dbReference>
<dbReference type="GO" id="GO:0031640">
    <property type="term" value="P:killing of cells of another organism"/>
    <property type="evidence" value="ECO:0007669"/>
    <property type="project" value="UniProtKB-KW"/>
</dbReference>
<accession>Q2V309</accession>
<feature type="signal peptide" evidence="2">
    <location>
        <begin position="1"/>
        <end position="19"/>
    </location>
</feature>
<feature type="chain" id="PRO_0000379761" description="Putative defensin-like protein 304">
    <location>
        <begin position="20"/>
        <end position="87"/>
    </location>
</feature>
<feature type="disulfide bond" evidence="1">
    <location>
        <begin position="27"/>
        <end position="46"/>
    </location>
</feature>
<feature type="disulfide bond" evidence="1">
    <location>
        <begin position="33"/>
        <end position="51"/>
    </location>
</feature>
<feature type="disulfide bond" evidence="1">
    <location>
        <begin position="40"/>
        <end position="53"/>
    </location>
</feature>
<protein>
    <recommendedName>
        <fullName>Putative defensin-like protein 304</fullName>
    </recommendedName>
</protein>
<proteinExistence type="inferred from homology"/>
<sequence length="87" mass="9887">MKSNKVTFFLGLFLVSAFCVRLTENMCFKDDDCINQGEWCPVLRVCSYAECICPWGTRSKLPSCQIICAHLDKKSVNSYNPCGCNYK</sequence>
<gene>
    <name type="ordered locus">At5g46877</name>
    <name type="ORF">MSD23</name>
</gene>
<comment type="subcellular location">
    <subcellularLocation>
        <location evidence="1">Secreted</location>
    </subcellularLocation>
</comment>
<comment type="similarity">
    <text evidence="3">Belongs to the DEFL family.</text>
</comment>
<comment type="caution">
    <text evidence="3">Lacks 1 of the 4 disulfide bonds, which are conserved features of the family.</text>
</comment>
<name>DF304_ARATH</name>
<evidence type="ECO:0000250" key="1"/>
<evidence type="ECO:0000255" key="2"/>
<evidence type="ECO:0000305" key="3"/>
<organism>
    <name type="scientific">Arabidopsis thaliana</name>
    <name type="common">Mouse-ear cress</name>
    <dbReference type="NCBI Taxonomy" id="3702"/>
    <lineage>
        <taxon>Eukaryota</taxon>
        <taxon>Viridiplantae</taxon>
        <taxon>Streptophyta</taxon>
        <taxon>Embryophyta</taxon>
        <taxon>Tracheophyta</taxon>
        <taxon>Spermatophyta</taxon>
        <taxon>Magnoliopsida</taxon>
        <taxon>eudicotyledons</taxon>
        <taxon>Gunneridae</taxon>
        <taxon>Pentapetalae</taxon>
        <taxon>rosids</taxon>
        <taxon>malvids</taxon>
        <taxon>Brassicales</taxon>
        <taxon>Brassicaceae</taxon>
        <taxon>Camelineae</taxon>
        <taxon>Arabidopsis</taxon>
    </lineage>
</organism>
<reference key="1">
    <citation type="journal article" date="2000" name="DNA Res.">
        <title>Structural analysis of Arabidopsis thaliana chromosome 5. X. Sequence features of the regions of 3,076,755 bp covered by sixty P1 and TAC clones.</title>
        <authorList>
            <person name="Sato S."/>
            <person name="Nakamura Y."/>
            <person name="Kaneko T."/>
            <person name="Katoh T."/>
            <person name="Asamizu E."/>
            <person name="Kotani H."/>
            <person name="Tabata S."/>
        </authorList>
    </citation>
    <scope>NUCLEOTIDE SEQUENCE [LARGE SCALE GENOMIC DNA]</scope>
    <source>
        <strain>cv. Columbia</strain>
    </source>
</reference>
<reference key="2">
    <citation type="journal article" date="2017" name="Plant J.">
        <title>Araport11: a complete reannotation of the Arabidopsis thaliana reference genome.</title>
        <authorList>
            <person name="Cheng C.Y."/>
            <person name="Krishnakumar V."/>
            <person name="Chan A.P."/>
            <person name="Thibaud-Nissen F."/>
            <person name="Schobel S."/>
            <person name="Town C.D."/>
        </authorList>
    </citation>
    <scope>GENOME REANNOTATION</scope>
    <source>
        <strain>cv. Columbia</strain>
    </source>
</reference>
<reference key="3">
    <citation type="journal article" date="2005" name="Plant Physiol.">
        <title>Genome organization of more than 300 defensin-like genes in Arabidopsis.</title>
        <authorList>
            <person name="Silverstein K.A.T."/>
            <person name="Graham M.A."/>
            <person name="Paape T.D."/>
            <person name="VandenBosch K.A."/>
        </authorList>
    </citation>
    <scope>GENE FAMILY</scope>
</reference>
<keyword id="KW-0929">Antimicrobial</keyword>
<keyword id="KW-1015">Disulfide bond</keyword>
<keyword id="KW-0295">Fungicide</keyword>
<keyword id="KW-0611">Plant defense</keyword>
<keyword id="KW-1185">Reference proteome</keyword>
<keyword id="KW-0964">Secreted</keyword>
<keyword id="KW-0732">Signal</keyword>